<dbReference type="EC" id="6.1.1.14" evidence="1"/>
<dbReference type="EMBL" id="AE009949">
    <property type="protein sequence ID" value="AAL98234.1"/>
    <property type="molecule type" value="Genomic_DNA"/>
</dbReference>
<dbReference type="RefSeq" id="WP_011018086.1">
    <property type="nucleotide sequence ID" value="NC_003485.1"/>
</dbReference>
<dbReference type="SMR" id="Q8NZW7"/>
<dbReference type="KEGG" id="spm:spyM18_1700"/>
<dbReference type="HOGENOM" id="CLU_007220_2_2_9"/>
<dbReference type="GO" id="GO:0005829">
    <property type="term" value="C:cytosol"/>
    <property type="evidence" value="ECO:0007669"/>
    <property type="project" value="TreeGrafter"/>
</dbReference>
<dbReference type="GO" id="GO:0004814">
    <property type="term" value="F:arginine-tRNA ligase activity"/>
    <property type="evidence" value="ECO:0007669"/>
    <property type="project" value="InterPro"/>
</dbReference>
<dbReference type="GO" id="GO:0005524">
    <property type="term" value="F:ATP binding"/>
    <property type="evidence" value="ECO:0007669"/>
    <property type="project" value="UniProtKB-UniRule"/>
</dbReference>
<dbReference type="GO" id="GO:0004820">
    <property type="term" value="F:glycine-tRNA ligase activity"/>
    <property type="evidence" value="ECO:0007669"/>
    <property type="project" value="UniProtKB-UniRule"/>
</dbReference>
<dbReference type="GO" id="GO:0006420">
    <property type="term" value="P:arginyl-tRNA aminoacylation"/>
    <property type="evidence" value="ECO:0007669"/>
    <property type="project" value="InterPro"/>
</dbReference>
<dbReference type="GO" id="GO:0006426">
    <property type="term" value="P:glycyl-tRNA aminoacylation"/>
    <property type="evidence" value="ECO:0007669"/>
    <property type="project" value="UniProtKB-UniRule"/>
</dbReference>
<dbReference type="HAMAP" id="MF_00255">
    <property type="entry name" value="Gly_tRNA_synth_beta"/>
    <property type="match status" value="1"/>
</dbReference>
<dbReference type="InterPro" id="IPR008909">
    <property type="entry name" value="DALR_anticod-bd"/>
</dbReference>
<dbReference type="InterPro" id="IPR015944">
    <property type="entry name" value="Gly-tRNA-synth_bsu"/>
</dbReference>
<dbReference type="InterPro" id="IPR006194">
    <property type="entry name" value="Gly-tRNA-synth_heterodimer"/>
</dbReference>
<dbReference type="NCBIfam" id="TIGR00211">
    <property type="entry name" value="glyS"/>
    <property type="match status" value="1"/>
</dbReference>
<dbReference type="PANTHER" id="PTHR30075:SF2">
    <property type="entry name" value="GLYCINE--TRNA LIGASE, CHLOROPLASTIC_MITOCHONDRIAL 2"/>
    <property type="match status" value="1"/>
</dbReference>
<dbReference type="PANTHER" id="PTHR30075">
    <property type="entry name" value="GLYCYL-TRNA SYNTHETASE"/>
    <property type="match status" value="1"/>
</dbReference>
<dbReference type="Pfam" id="PF05746">
    <property type="entry name" value="DALR_1"/>
    <property type="match status" value="1"/>
</dbReference>
<dbReference type="Pfam" id="PF02092">
    <property type="entry name" value="tRNA_synt_2f"/>
    <property type="match status" value="1"/>
</dbReference>
<dbReference type="PRINTS" id="PR01045">
    <property type="entry name" value="TRNASYNTHGB"/>
</dbReference>
<dbReference type="SUPFAM" id="SSF109604">
    <property type="entry name" value="HD-domain/PDEase-like"/>
    <property type="match status" value="1"/>
</dbReference>
<dbReference type="PROSITE" id="PS50861">
    <property type="entry name" value="AA_TRNA_LIGASE_II_GLYAB"/>
    <property type="match status" value="1"/>
</dbReference>
<feature type="chain" id="PRO_0000072932" description="Glycine--tRNA ligase beta subunit">
    <location>
        <begin position="1"/>
        <end position="679"/>
    </location>
</feature>
<name>SYGB_STRP8</name>
<proteinExistence type="inferred from homology"/>
<gene>
    <name evidence="1" type="primary">glyS</name>
    <name type="ordered locus">spyM18_1700</name>
</gene>
<organism>
    <name type="scientific">Streptococcus pyogenes serotype M18 (strain MGAS8232)</name>
    <dbReference type="NCBI Taxonomy" id="186103"/>
    <lineage>
        <taxon>Bacteria</taxon>
        <taxon>Bacillati</taxon>
        <taxon>Bacillota</taxon>
        <taxon>Bacilli</taxon>
        <taxon>Lactobacillales</taxon>
        <taxon>Streptococcaceae</taxon>
        <taxon>Streptococcus</taxon>
    </lineage>
</organism>
<reference key="1">
    <citation type="journal article" date="2002" name="Proc. Natl. Acad. Sci. U.S.A.">
        <title>Genome sequence and comparative microarray analysis of serotype M18 group A Streptococcus strains associated with acute rheumatic fever outbreaks.</title>
        <authorList>
            <person name="Smoot J.C."/>
            <person name="Barbian K.D."/>
            <person name="Van Gompel J.J."/>
            <person name="Smoot L.M."/>
            <person name="Chaussee M.S."/>
            <person name="Sylva G.L."/>
            <person name="Sturdevant D.E."/>
            <person name="Ricklefs S.M."/>
            <person name="Porcella S.F."/>
            <person name="Parkins L.D."/>
            <person name="Beres S.B."/>
            <person name="Campbell D.S."/>
            <person name="Smith T.M."/>
            <person name="Zhang Q."/>
            <person name="Kapur V."/>
            <person name="Daly J.A."/>
            <person name="Veasy L.G."/>
            <person name="Musser J.M."/>
        </authorList>
    </citation>
    <scope>NUCLEOTIDE SEQUENCE [LARGE SCALE GENOMIC DNA]</scope>
    <source>
        <strain>MGAS8232</strain>
    </source>
</reference>
<comment type="catalytic activity">
    <reaction evidence="1">
        <text>tRNA(Gly) + glycine + ATP = glycyl-tRNA(Gly) + AMP + diphosphate</text>
        <dbReference type="Rhea" id="RHEA:16013"/>
        <dbReference type="Rhea" id="RHEA-COMP:9664"/>
        <dbReference type="Rhea" id="RHEA-COMP:9683"/>
        <dbReference type="ChEBI" id="CHEBI:30616"/>
        <dbReference type="ChEBI" id="CHEBI:33019"/>
        <dbReference type="ChEBI" id="CHEBI:57305"/>
        <dbReference type="ChEBI" id="CHEBI:78442"/>
        <dbReference type="ChEBI" id="CHEBI:78522"/>
        <dbReference type="ChEBI" id="CHEBI:456215"/>
        <dbReference type="EC" id="6.1.1.14"/>
    </reaction>
</comment>
<comment type="subunit">
    <text evidence="1">Tetramer of two alpha and two beta subunits.</text>
</comment>
<comment type="subcellular location">
    <subcellularLocation>
        <location evidence="1">Cytoplasm</location>
    </subcellularLocation>
</comment>
<comment type="similarity">
    <text evidence="1">Belongs to the class-II aminoacyl-tRNA synthetase family.</text>
</comment>
<sequence>MSKNLLIELGLEELPAYVVTPSEKQLGERLATFLTENRLSFEDIQTFSTPRRLAVRVSGLADQQTDLTEDFKGPAKKIALDADGNFSKAAQGFVRGKGLTTDAIEFREVKGEEYVYVTKHEAGKPAKEVLLGVTEVLSAMTFPVSMHWANNSFEYIRPVHTLTVLLNDEALELDFLDIHSGRVSRGHRFLGTETTITSADSYEADLRSQFVIADAKERQEMIVEQIKTLEVEQGVQVDIDEDLLNEVLNLVEFPTAFMGSFEAKYLDVPEEVLVTSMKNHQRYFVVRDQAGHLMPNFVSVRNGNDQAIENVIKGNEKVLVARLEDGEFFWREDQKLQIADLVAKLTNVTFHEKIGSLAEHMDRTRVIAASLAKEANLSAEEVTAVDRAAQIYKFDLLTGMVGEFDELQGIMGEKYALLAGEDAAVATAIREHYLPDAAGGALPETKVGAVLALADKLDTLLSFFSVGLIPSGSNDPYALRRATQGIVRILDHFGWRIPMDKLVDSLYDLSFDSLTYANKADVMNFIRARVDKMMGKAAPKDIREAVLESSTFVVPEMLAAAEALVKASHTENYKPAVESLSRAFNLAEKADASVQVDPSLFENEQENTLFAAIQGLTLAGSAAQQLEQVFALSPVINDFFDNTMVMAEDQALKNNRLAILSDLVSKAKTIAAFNQLNTK</sequence>
<protein>
    <recommendedName>
        <fullName evidence="1">Glycine--tRNA ligase beta subunit</fullName>
        <ecNumber evidence="1">6.1.1.14</ecNumber>
    </recommendedName>
    <alternativeName>
        <fullName evidence="1">Glycyl-tRNA synthetase beta subunit</fullName>
        <shortName evidence="1">GlyRS</shortName>
    </alternativeName>
</protein>
<accession>Q8NZW7</accession>
<evidence type="ECO:0000255" key="1">
    <source>
        <dbReference type="HAMAP-Rule" id="MF_00255"/>
    </source>
</evidence>
<keyword id="KW-0030">Aminoacyl-tRNA synthetase</keyword>
<keyword id="KW-0067">ATP-binding</keyword>
<keyword id="KW-0963">Cytoplasm</keyword>
<keyword id="KW-0436">Ligase</keyword>
<keyword id="KW-0547">Nucleotide-binding</keyword>
<keyword id="KW-0648">Protein biosynthesis</keyword>